<dbReference type="EC" id="5.1.1.3" evidence="1"/>
<dbReference type="EMBL" id="CP001638">
    <property type="protein sequence ID" value="ACS25297.1"/>
    <property type="molecule type" value="Genomic_DNA"/>
</dbReference>
<dbReference type="SMR" id="C5D5M9"/>
<dbReference type="STRING" id="471223.GWCH70_2602"/>
<dbReference type="KEGG" id="gwc:GWCH70_2602"/>
<dbReference type="eggNOG" id="COG0796">
    <property type="taxonomic scope" value="Bacteria"/>
</dbReference>
<dbReference type="HOGENOM" id="CLU_052344_0_2_9"/>
<dbReference type="OrthoDB" id="9801055at2"/>
<dbReference type="UniPathway" id="UPA00219"/>
<dbReference type="GO" id="GO:0008881">
    <property type="term" value="F:glutamate racemase activity"/>
    <property type="evidence" value="ECO:0007669"/>
    <property type="project" value="UniProtKB-UniRule"/>
</dbReference>
<dbReference type="GO" id="GO:0071555">
    <property type="term" value="P:cell wall organization"/>
    <property type="evidence" value="ECO:0007669"/>
    <property type="project" value="UniProtKB-KW"/>
</dbReference>
<dbReference type="GO" id="GO:0009252">
    <property type="term" value="P:peptidoglycan biosynthetic process"/>
    <property type="evidence" value="ECO:0007669"/>
    <property type="project" value="UniProtKB-UniRule"/>
</dbReference>
<dbReference type="GO" id="GO:0008360">
    <property type="term" value="P:regulation of cell shape"/>
    <property type="evidence" value="ECO:0007669"/>
    <property type="project" value="UniProtKB-KW"/>
</dbReference>
<dbReference type="FunFam" id="3.40.50.1860:FF:000002">
    <property type="entry name" value="Glutamate racemase"/>
    <property type="match status" value="1"/>
</dbReference>
<dbReference type="Gene3D" id="3.40.50.1860">
    <property type="match status" value="2"/>
</dbReference>
<dbReference type="HAMAP" id="MF_00258">
    <property type="entry name" value="Glu_racemase"/>
    <property type="match status" value="1"/>
</dbReference>
<dbReference type="InterPro" id="IPR015942">
    <property type="entry name" value="Asp/Glu/hydantoin_racemase"/>
</dbReference>
<dbReference type="InterPro" id="IPR001920">
    <property type="entry name" value="Asp/Glu_race"/>
</dbReference>
<dbReference type="InterPro" id="IPR018187">
    <property type="entry name" value="Asp/Glu_racemase_AS_1"/>
</dbReference>
<dbReference type="InterPro" id="IPR033134">
    <property type="entry name" value="Asp/Glu_racemase_AS_2"/>
</dbReference>
<dbReference type="InterPro" id="IPR004391">
    <property type="entry name" value="Glu_race"/>
</dbReference>
<dbReference type="NCBIfam" id="TIGR00067">
    <property type="entry name" value="glut_race"/>
    <property type="match status" value="1"/>
</dbReference>
<dbReference type="NCBIfam" id="NF002035">
    <property type="entry name" value="PRK00865.1-3"/>
    <property type="match status" value="1"/>
</dbReference>
<dbReference type="PANTHER" id="PTHR21198">
    <property type="entry name" value="GLUTAMATE RACEMASE"/>
    <property type="match status" value="1"/>
</dbReference>
<dbReference type="PANTHER" id="PTHR21198:SF2">
    <property type="entry name" value="GLUTAMATE RACEMASE"/>
    <property type="match status" value="1"/>
</dbReference>
<dbReference type="Pfam" id="PF01177">
    <property type="entry name" value="Asp_Glu_race"/>
    <property type="match status" value="1"/>
</dbReference>
<dbReference type="SUPFAM" id="SSF53681">
    <property type="entry name" value="Aspartate/glutamate racemase"/>
    <property type="match status" value="2"/>
</dbReference>
<dbReference type="PROSITE" id="PS00923">
    <property type="entry name" value="ASP_GLU_RACEMASE_1"/>
    <property type="match status" value="1"/>
</dbReference>
<dbReference type="PROSITE" id="PS00924">
    <property type="entry name" value="ASP_GLU_RACEMASE_2"/>
    <property type="match status" value="1"/>
</dbReference>
<reference key="1">
    <citation type="submission" date="2009-06" db="EMBL/GenBank/DDBJ databases">
        <title>Complete sequence of chromosome of Geopacillus sp. WCH70.</title>
        <authorList>
            <consortium name="US DOE Joint Genome Institute"/>
            <person name="Lucas S."/>
            <person name="Copeland A."/>
            <person name="Lapidus A."/>
            <person name="Glavina del Rio T."/>
            <person name="Dalin E."/>
            <person name="Tice H."/>
            <person name="Bruce D."/>
            <person name="Goodwin L."/>
            <person name="Pitluck S."/>
            <person name="Chertkov O."/>
            <person name="Brettin T."/>
            <person name="Detter J.C."/>
            <person name="Han C."/>
            <person name="Larimer F."/>
            <person name="Land M."/>
            <person name="Hauser L."/>
            <person name="Kyrpides N."/>
            <person name="Mikhailova N."/>
            <person name="Brumm P."/>
            <person name="Mead D.A."/>
            <person name="Richardson P."/>
        </authorList>
    </citation>
    <scope>NUCLEOTIDE SEQUENCE [LARGE SCALE GENOMIC DNA]</scope>
    <source>
        <strain>WCH70</strain>
    </source>
</reference>
<keyword id="KW-0133">Cell shape</keyword>
<keyword id="KW-0961">Cell wall biogenesis/degradation</keyword>
<keyword id="KW-0413">Isomerase</keyword>
<keyword id="KW-0573">Peptidoglycan synthesis</keyword>
<sequence length="264" mass="29372">MERAIGVIDSGVGGLTVAKEIMRQLPKERIVYLGDTARCPYGPRPKEEIRQFTWEMTNYLLRYNIKMLVIACNTATAVVLDEIREQLDIPVLGVVHPGARAALKATKNGHIGVIGTIGTVKSGAYEKALKSINHRVRVESLACPKFVPLVESGNFEGEEARKIVAESLEPFKSSNMDVLILGCTHYPLLSPLIKEYMGKRVKLICSGDETAREVSAILHHSHLLYTGQREAEHLFFTTGSKELFQKIASKWFGKPIENVQTIEL</sequence>
<proteinExistence type="inferred from homology"/>
<protein>
    <recommendedName>
        <fullName evidence="1">Glutamate racemase</fullName>
        <ecNumber evidence="1">5.1.1.3</ecNumber>
    </recommendedName>
</protein>
<evidence type="ECO:0000255" key="1">
    <source>
        <dbReference type="HAMAP-Rule" id="MF_00258"/>
    </source>
</evidence>
<comment type="function">
    <text evidence="1">Provides the (R)-glutamate required for cell wall biosynthesis.</text>
</comment>
<comment type="catalytic activity">
    <reaction evidence="1">
        <text>L-glutamate = D-glutamate</text>
        <dbReference type="Rhea" id="RHEA:12813"/>
        <dbReference type="ChEBI" id="CHEBI:29985"/>
        <dbReference type="ChEBI" id="CHEBI:29986"/>
        <dbReference type="EC" id="5.1.1.3"/>
    </reaction>
</comment>
<comment type="pathway">
    <text evidence="1">Cell wall biogenesis; peptidoglycan biosynthesis.</text>
</comment>
<comment type="similarity">
    <text evidence="1">Belongs to the aspartate/glutamate racemases family.</text>
</comment>
<name>MURI_GEOSW</name>
<gene>
    <name evidence="1" type="primary">murI</name>
    <name type="ordered locus">GWCH70_2602</name>
</gene>
<accession>C5D5M9</accession>
<organism>
    <name type="scientific">Geobacillus sp. (strain WCH70)</name>
    <dbReference type="NCBI Taxonomy" id="471223"/>
    <lineage>
        <taxon>Bacteria</taxon>
        <taxon>Bacillati</taxon>
        <taxon>Bacillota</taxon>
        <taxon>Bacilli</taxon>
        <taxon>Bacillales</taxon>
        <taxon>Anoxybacillaceae</taxon>
        <taxon>Geobacillus</taxon>
    </lineage>
</organism>
<feature type="chain" id="PRO_1000204628" description="Glutamate racemase">
    <location>
        <begin position="1"/>
        <end position="264"/>
    </location>
</feature>
<feature type="active site" description="Proton donor/acceptor" evidence="1">
    <location>
        <position position="72"/>
    </location>
</feature>
<feature type="active site" description="Proton donor/acceptor" evidence="1">
    <location>
        <position position="183"/>
    </location>
</feature>
<feature type="binding site" evidence="1">
    <location>
        <begin position="9"/>
        <end position="10"/>
    </location>
    <ligand>
        <name>substrate</name>
    </ligand>
</feature>
<feature type="binding site" evidence="1">
    <location>
        <begin position="41"/>
        <end position="42"/>
    </location>
    <ligand>
        <name>substrate</name>
    </ligand>
</feature>
<feature type="binding site" evidence="1">
    <location>
        <begin position="73"/>
        <end position="74"/>
    </location>
    <ligand>
        <name>substrate</name>
    </ligand>
</feature>
<feature type="binding site" evidence="1">
    <location>
        <begin position="184"/>
        <end position="185"/>
    </location>
    <ligand>
        <name>substrate</name>
    </ligand>
</feature>